<keyword id="KW-0520">NAD</keyword>
<keyword id="KW-0521">NADP</keyword>
<keyword id="KW-0560">Oxidoreductase</keyword>
<keyword id="KW-1185">Reference proteome</keyword>
<keyword id="KW-0964">Secreted</keyword>
<keyword id="KW-0732">Signal</keyword>
<name>DS7CA_DANRE</name>
<evidence type="ECO:0000250" key="1"/>
<evidence type="ECO:0000255" key="2"/>
<evidence type="ECO:0000255" key="3">
    <source>
        <dbReference type="PROSITE-ProRule" id="PRU10001"/>
    </source>
</evidence>
<evidence type="ECO:0000305" key="4"/>
<dbReference type="EC" id="1.1.-.-"/>
<dbReference type="EMBL" id="BC095682">
    <property type="protein sequence ID" value="AAH95682.1"/>
    <property type="molecule type" value="mRNA"/>
</dbReference>
<dbReference type="EMBL" id="BC153545">
    <property type="protein sequence ID" value="AAI53546.1"/>
    <property type="molecule type" value="mRNA"/>
</dbReference>
<dbReference type="RefSeq" id="NP_001018493.1">
    <property type="nucleotide sequence ID" value="NM_001020657.1"/>
</dbReference>
<dbReference type="SMR" id="A8E5C5"/>
<dbReference type="FunCoup" id="A8E5C5">
    <property type="interactions" value="10"/>
</dbReference>
<dbReference type="STRING" id="7955.ENSDARP00000097447"/>
<dbReference type="PaxDb" id="7955-ENSDARP00000097447"/>
<dbReference type="PeptideAtlas" id="A8E5C5"/>
<dbReference type="Ensembl" id="ENSDART00000106669">
    <property type="protein sequence ID" value="ENSDARP00000097447"/>
    <property type="gene ID" value="ENSDARG00000071877"/>
</dbReference>
<dbReference type="GeneID" id="553684"/>
<dbReference type="KEGG" id="dre:553684"/>
<dbReference type="AGR" id="ZFIN:ZDB-GENE-050522-226"/>
<dbReference type="CTD" id="553684"/>
<dbReference type="ZFIN" id="ZDB-GENE-050522-226">
    <property type="gene designation" value="dhrs7cb"/>
</dbReference>
<dbReference type="eggNOG" id="KOG1205">
    <property type="taxonomic scope" value="Eukaryota"/>
</dbReference>
<dbReference type="HOGENOM" id="CLU_010194_2_1_1"/>
<dbReference type="InParanoid" id="A8E5C5"/>
<dbReference type="OMA" id="NIMDVNY"/>
<dbReference type="OrthoDB" id="5307821at2759"/>
<dbReference type="PhylomeDB" id="A8E5C5"/>
<dbReference type="TreeFam" id="TF313474"/>
<dbReference type="PRO" id="PR:A8E5C5"/>
<dbReference type="Proteomes" id="UP000000437">
    <property type="component" value="Chromosome 12"/>
</dbReference>
<dbReference type="Bgee" id="ENSDARG00000071877">
    <property type="expression patterns" value="Expressed in muscle tissue and 14 other cell types or tissues"/>
</dbReference>
<dbReference type="GO" id="GO:0005576">
    <property type="term" value="C:extracellular region"/>
    <property type="evidence" value="ECO:0007669"/>
    <property type="project" value="UniProtKB-SubCell"/>
</dbReference>
<dbReference type="GO" id="GO:0016616">
    <property type="term" value="F:oxidoreductase activity, acting on the CH-OH group of donors, NAD or NADP as acceptor"/>
    <property type="evidence" value="ECO:0000318"/>
    <property type="project" value="GO_Central"/>
</dbReference>
<dbReference type="GO" id="GO:0006874">
    <property type="term" value="P:intracellular calcium ion homeostasis"/>
    <property type="evidence" value="ECO:0000318"/>
    <property type="project" value="GO_Central"/>
</dbReference>
<dbReference type="CDD" id="cd05332">
    <property type="entry name" value="11beta-HSD1_like_SDR_c"/>
    <property type="match status" value="1"/>
</dbReference>
<dbReference type="Gene3D" id="3.40.50.720">
    <property type="entry name" value="NAD(P)-binding Rossmann-like Domain"/>
    <property type="match status" value="1"/>
</dbReference>
<dbReference type="InterPro" id="IPR036291">
    <property type="entry name" value="NAD(P)-bd_dom_sf"/>
</dbReference>
<dbReference type="InterPro" id="IPR020904">
    <property type="entry name" value="Sc_DH/Rdtase_CS"/>
</dbReference>
<dbReference type="InterPro" id="IPR002347">
    <property type="entry name" value="SDR_fam"/>
</dbReference>
<dbReference type="InterPro" id="IPR052148">
    <property type="entry name" value="SDR_family_member_7C"/>
</dbReference>
<dbReference type="PANTHER" id="PTHR44668">
    <property type="match status" value="1"/>
</dbReference>
<dbReference type="PANTHER" id="PTHR44668:SF4">
    <property type="entry name" value="DEHYDROGENASE_REDUCTASE SDR FAMILY MEMBER 7C-A"/>
    <property type="match status" value="1"/>
</dbReference>
<dbReference type="Pfam" id="PF00106">
    <property type="entry name" value="adh_short"/>
    <property type="match status" value="1"/>
</dbReference>
<dbReference type="PRINTS" id="PR00081">
    <property type="entry name" value="GDHRDH"/>
</dbReference>
<dbReference type="SUPFAM" id="SSF51735">
    <property type="entry name" value="NAD(P)-binding Rossmann-fold domains"/>
    <property type="match status" value="1"/>
</dbReference>
<dbReference type="PROSITE" id="PS00061">
    <property type="entry name" value="ADH_SHORT"/>
    <property type="match status" value="1"/>
</dbReference>
<accession>A8E5C5</accession>
<accession>Q502I7</accession>
<protein>
    <recommendedName>
        <fullName>Dehydrogenase/reductase SDR family member 7C-A</fullName>
        <ecNumber>1.1.-.-</ecNumber>
    </recommendedName>
</protein>
<comment type="function">
    <text evidence="4">Putative oxidoreductase.</text>
</comment>
<comment type="subcellular location">
    <subcellularLocation>
        <location evidence="4">Secreted</location>
    </subcellularLocation>
</comment>
<comment type="similarity">
    <text evidence="4">Belongs to the short-chain dehydrogenases/reductases (SDR) family.</text>
</comment>
<proteinExistence type="evidence at transcript level"/>
<organism>
    <name type="scientific">Danio rerio</name>
    <name type="common">Zebrafish</name>
    <name type="synonym">Brachydanio rerio</name>
    <dbReference type="NCBI Taxonomy" id="7955"/>
    <lineage>
        <taxon>Eukaryota</taxon>
        <taxon>Metazoa</taxon>
        <taxon>Chordata</taxon>
        <taxon>Craniata</taxon>
        <taxon>Vertebrata</taxon>
        <taxon>Euteleostomi</taxon>
        <taxon>Actinopterygii</taxon>
        <taxon>Neopterygii</taxon>
        <taxon>Teleostei</taxon>
        <taxon>Ostariophysi</taxon>
        <taxon>Cypriniformes</taxon>
        <taxon>Danionidae</taxon>
        <taxon>Danioninae</taxon>
        <taxon>Danio</taxon>
    </lineage>
</organism>
<reference key="1">
    <citation type="submission" date="2007-09" db="EMBL/GenBank/DDBJ databases">
        <authorList>
            <consortium name="NIH - Zebrafish Gene Collection (ZGC) project"/>
        </authorList>
    </citation>
    <scope>NUCLEOTIDE SEQUENCE [LARGE SCALE MRNA]</scope>
    <source>
        <strain>WIK</strain>
        <tissue>Larva</tissue>
    </source>
</reference>
<gene>
    <name type="primary">dhrs7ca</name>
    <name type="ORF">zgc:112176</name>
</gene>
<sequence>MAVPSVMVLPLLIVVFAGVYYVYNEVMRFMSKSVVRNKVVVITDAVSGMGSECARLFHAGGARLVLCGPSWDKLESLYDSLCSGSDPSQTFTPKLVLLDFSDMENISDVVSEICECYGCVDVLICNSSMKVKAPVQNLSLEMDKTIMDVNYFGPITLAKGVLPLMITRRTGQFVLVNSIQGKLALPFRTCYAASKHAVQAFFDCLRAEVEEFGISVSTISHTFINAGAENATPTEATPITATPTKATPTNPIWAYVCSKLNTHGVSPQILAQEIVRSVNRQSREVFLAHPVPTVALYIRALMPGCFFSVVSAGVRDGAMAEQLK</sequence>
<feature type="signal peptide" evidence="2">
    <location>
        <begin position="1"/>
        <end position="17"/>
    </location>
</feature>
<feature type="chain" id="PRO_0000333757" description="Dehydrogenase/reductase SDR family member 7C-A">
    <location>
        <begin position="18"/>
        <end position="324"/>
    </location>
</feature>
<feature type="active site" description="Proton acceptor" evidence="3">
    <location>
        <position position="191"/>
    </location>
</feature>
<feature type="binding site" evidence="1">
    <location>
        <begin position="41"/>
        <end position="65"/>
    </location>
    <ligand>
        <name>NAD(+)</name>
        <dbReference type="ChEBI" id="CHEBI:57540"/>
    </ligand>
</feature>
<feature type="binding site" evidence="2">
    <location>
        <position position="178"/>
    </location>
    <ligand>
        <name>substrate</name>
    </ligand>
</feature>
<feature type="sequence conflict" description="In Ref. 1; AAH95682." evidence="4" ref="1">
    <original>S</original>
    <variation>G</variation>
    <location>
        <position position="266"/>
    </location>
</feature>
<feature type="sequence conflict" description="In Ref. 1; AAH95682." evidence="4" ref="1">
    <original>Q</original>
    <variation>R</variation>
    <location>
        <position position="272"/>
    </location>
</feature>